<keyword id="KW-0002">3D-structure</keyword>
<keyword id="KW-1003">Cell membrane</keyword>
<keyword id="KW-1015">Disulfide bond</keyword>
<keyword id="KW-0325">Glycoprotein</keyword>
<keyword id="KW-0326">Glycosidase</keyword>
<keyword id="KW-0336">GPI-anchor</keyword>
<keyword id="KW-0378">Hydrolase</keyword>
<keyword id="KW-0391">Immunity</keyword>
<keyword id="KW-0395">Inflammatory response</keyword>
<keyword id="KW-0399">Innate immunity</keyword>
<keyword id="KW-0442">Lipid degradation</keyword>
<keyword id="KW-0443">Lipid metabolism</keyword>
<keyword id="KW-0449">Lipoprotein</keyword>
<keyword id="KW-0472">Membrane</keyword>
<keyword id="KW-0479">Metal-binding</keyword>
<keyword id="KW-1185">Reference proteome</keyword>
<keyword id="KW-0964">Secreted</keyword>
<keyword id="KW-0732">Signal</keyword>
<keyword id="KW-0862">Zinc</keyword>
<gene>
    <name type="primary">Smpdl3b</name>
    <name type="synonym">Asml3b</name>
</gene>
<name>ASM3B_MOUSE</name>
<proteinExistence type="evidence at protein level"/>
<reference key="1">
    <citation type="journal article" date="2004" name="Genome Res.">
        <title>The status, quality, and expansion of the NIH full-length cDNA project: the Mammalian Gene Collection (MGC).</title>
        <authorList>
            <consortium name="The MGC Project Team"/>
        </authorList>
    </citation>
    <scope>NUCLEOTIDE SEQUENCE [LARGE SCALE MRNA]</scope>
</reference>
<reference key="2">
    <citation type="journal article" date="2009" name="Mol. Cell. Proteomics">
        <title>The mouse C2C12 myoblast cell surface N-linked glycoproteome: identification, glycosite occupancy, and membrane orientation.</title>
        <authorList>
            <person name="Gundry R.L."/>
            <person name="Raginski K."/>
            <person name="Tarasova Y."/>
            <person name="Tchernyshyov I."/>
            <person name="Bausch-Fluck D."/>
            <person name="Elliott S.T."/>
            <person name="Boheler K.R."/>
            <person name="Van Eyk J.E."/>
            <person name="Wollscheid B."/>
        </authorList>
    </citation>
    <scope>GLYCOSYLATION [LARGE SCALE ANALYSIS] AT ASN-34 AND ASN-223</scope>
    <source>
        <tissue>Myoblast</tissue>
    </source>
</reference>
<reference key="3">
    <citation type="journal article" date="2009" name="Nat. Biotechnol.">
        <title>Mass-spectrometric identification and relative quantification of N-linked cell surface glycoproteins.</title>
        <authorList>
            <person name="Wollscheid B."/>
            <person name="Bausch-Fluck D."/>
            <person name="Henderson C."/>
            <person name="O'Brien R."/>
            <person name="Bibel M."/>
            <person name="Schiess R."/>
            <person name="Aebersold R."/>
            <person name="Watts J.D."/>
        </authorList>
    </citation>
    <scope>GLYCOSYLATION [LARGE SCALE ANALYSIS] AT ASN-34; ASN-164 AND ASN-223</scope>
</reference>
<reference key="4">
    <citation type="journal article" date="2010" name="Cell">
        <title>A tissue-specific atlas of mouse protein phosphorylation and expression.</title>
        <authorList>
            <person name="Huttlin E.L."/>
            <person name="Jedrychowski M.P."/>
            <person name="Elias J.E."/>
            <person name="Goswami T."/>
            <person name="Rad R."/>
            <person name="Beausoleil S.A."/>
            <person name="Villen J."/>
            <person name="Haas W."/>
            <person name="Sowa M.E."/>
            <person name="Gygi S.P."/>
        </authorList>
    </citation>
    <scope>IDENTIFICATION BY MASS SPECTROMETRY [LARGE SCALE ANALYSIS]</scope>
    <source>
        <tissue>Testis</tissue>
    </source>
</reference>
<reference key="5">
    <citation type="journal article" date="2015" name="Cell Rep.">
        <title>The lipid-modifying enzyme SMPDL3B negatively regulates innate immunity.</title>
        <authorList>
            <person name="Heinz L.X."/>
            <person name="Baumann C.L."/>
            <person name="Koeberlin M.S."/>
            <person name="Snijder B."/>
            <person name="Gawish R."/>
            <person name="Shui G."/>
            <person name="Sharif O."/>
            <person name="Aspalter I.M."/>
            <person name="Mueller A.C."/>
            <person name="Kandasamy R.K."/>
            <person name="Breitwieser F.P."/>
            <person name="Pichlmair A."/>
            <person name="Bruckner M."/>
            <person name="Rebsamen M."/>
            <person name="Blueml S."/>
            <person name="Karonitsch T."/>
            <person name="Fauster A."/>
            <person name="Colinge J."/>
            <person name="Bennett K.L."/>
            <person name="Knapp S."/>
            <person name="Wenk M.R."/>
            <person name="Superti-Furga G."/>
        </authorList>
    </citation>
    <scope>FUNCTION</scope>
    <scope>CATALYTIC ACTIVITY</scope>
    <scope>SUBCELLULAR LOCATION</scope>
    <scope>GLYCOSYLATION</scope>
    <scope>INTERACTION WITH TLR4; TLR7; TLR8 AND TLR9</scope>
    <scope>TISSUE SPECIFICITY</scope>
    <scope>MUTAGENESIS OF HIS-135</scope>
    <scope>INDUCTION</scope>
    <scope>DISRUPTION PHENOTYPE</scope>
</reference>
<reference evidence="8 9" key="6">
    <citation type="journal article" date="2016" name="J. Biol. Chem.">
        <title>Crystal Structure of the Acid Sphingomyelinase-like Phosphodiesterase SMPDL3B Provides Insights into Determinants of Substrate Specificity.</title>
        <authorList>
            <person name="Gorelik A."/>
            <person name="Heinz L.X."/>
            <person name="Illes K."/>
            <person name="Superti-Furga G."/>
            <person name="Nagar B."/>
        </authorList>
    </citation>
    <scope>X-RAY CRYSTALLOGRAPHY (1.14 ANGSTROMS) OF 19-435 IN COMPLEX WITH ZINC AND PHOSPHOCHOLINE</scope>
    <scope>COFACTOR</scope>
    <scope>GLYCOSYLATION AT ASN-34; ASN-72 AND ASN-223</scope>
    <scope>DISULFIDE BONDS</scope>
    <scope>FUNCTION</scope>
    <scope>CATALYTIC ACTIVITY</scope>
    <scope>MUTAGENESIS OF HIS-135; 140-LYS-ASN-141; 198-TYR--ASN-200 AND 307-LYS--ASP-315</scope>
</reference>
<comment type="function">
    <text evidence="5 6">Lipid-modulating phosphodiesterase. Active on the surface of macrophages and dendritic cells and strongly influences macrophage lipid composition and membrane fluidity (PubMed:26095358). Acts as a negative regulator of Toll-like receptor signaling (PubMed:26095358, PubMed:27687724). Has in vitro phosphodiesterase activity, but the physiological substrate is unknown (PubMed:26095358, PubMed:27687724). Lacks activity with phosphocholine-containing lipids, but can cleave CDP-choline, and can release phosphate from ATP and ADP (in vitro) (PubMed:27687724).</text>
</comment>
<comment type="cofactor">
    <cofactor evidence="6">
        <name>Zn(2+)</name>
        <dbReference type="ChEBI" id="CHEBI:29105"/>
    </cofactor>
    <text evidence="6">Binds 2 Zn(2+) ions per subunit.</text>
</comment>
<comment type="subunit">
    <text evidence="5">Interacts with TLR4, TLR7, TLR8 and TLR9.</text>
</comment>
<comment type="subcellular location">
    <subcellularLocation>
        <location evidence="1">Secreted</location>
    </subcellularLocation>
    <subcellularLocation>
        <location>Cell membrane</location>
        <topology evidence="5">Lipid-anchor</topology>
        <topology evidence="5">GPI-anchor</topology>
    </subcellularLocation>
</comment>
<comment type="tissue specificity">
    <text evidence="5">Macrophages and dendritic cells.</text>
</comment>
<comment type="induction">
    <text evidence="5">Strongly up-regulated by TLR stimuli and interferon gamma.</text>
</comment>
<comment type="PTM">
    <text evidence="5">N-glycosylated.</text>
</comment>
<comment type="disruption phenotype">
    <text evidence="5">Mice display higher inflammatory responses in models of TLR-dependent peritonitis. Macrophages show enhanced responsiveness to TLR stimulation and a significant change in membrane fluidity and the global cellular lipid composition.</text>
</comment>
<comment type="similarity">
    <text evidence="7">Belongs to the acid sphingomyelinase family.</text>
</comment>
<dbReference type="EC" id="3.1.4.-" evidence="5 6"/>
<dbReference type="EMBL" id="BC009087">
    <property type="protein sequence ID" value="AAH09087.1"/>
    <property type="molecule type" value="mRNA"/>
</dbReference>
<dbReference type="CCDS" id="CCDS18733.1"/>
<dbReference type="RefSeq" id="NP_598649.1">
    <property type="nucleotide sequence ID" value="NM_133888.2"/>
</dbReference>
<dbReference type="PDB" id="5KAR">
    <property type="method" value="X-ray"/>
    <property type="resolution" value="1.14 A"/>
    <property type="chains" value="A=19-435"/>
</dbReference>
<dbReference type="PDB" id="5KAS">
    <property type="method" value="X-ray"/>
    <property type="resolution" value="1.62 A"/>
    <property type="chains" value="A=19-435"/>
</dbReference>
<dbReference type="PDBsum" id="5KAR"/>
<dbReference type="PDBsum" id="5KAS"/>
<dbReference type="SMR" id="P58242"/>
<dbReference type="BioGRID" id="221436">
    <property type="interactions" value="1"/>
</dbReference>
<dbReference type="FunCoup" id="P58242">
    <property type="interactions" value="297"/>
</dbReference>
<dbReference type="IntAct" id="P58242">
    <property type="interactions" value="2"/>
</dbReference>
<dbReference type="STRING" id="10090.ENSMUSP00000030709"/>
<dbReference type="GlyConnect" id="2104">
    <property type="glycosylation" value="1 N-Linked glycan (1 site)"/>
</dbReference>
<dbReference type="GlyCosmos" id="P58242">
    <property type="glycosylation" value="5 sites, 1 glycan"/>
</dbReference>
<dbReference type="GlyGen" id="P58242">
    <property type="glycosylation" value="6 sites, 2 N-linked glycans (1 site), 1 O-linked glycan (1 site)"/>
</dbReference>
<dbReference type="iPTMnet" id="P58242"/>
<dbReference type="PhosphoSitePlus" id="P58242"/>
<dbReference type="SwissPalm" id="P58242"/>
<dbReference type="PaxDb" id="10090-ENSMUSP00000030709"/>
<dbReference type="PeptideAtlas" id="P58242"/>
<dbReference type="ProteomicsDB" id="277258"/>
<dbReference type="Antibodypedia" id="30880">
    <property type="antibodies" value="93 antibodies from 19 providers"/>
</dbReference>
<dbReference type="DNASU" id="100340"/>
<dbReference type="Ensembl" id="ENSMUST00000030709.9">
    <property type="protein sequence ID" value="ENSMUSP00000030709.9"/>
    <property type="gene ID" value="ENSMUSG00000028885.9"/>
</dbReference>
<dbReference type="GeneID" id="100340"/>
<dbReference type="KEGG" id="mmu:100340"/>
<dbReference type="UCSC" id="uc008vbs.1">
    <property type="organism name" value="mouse"/>
</dbReference>
<dbReference type="AGR" id="MGI:1916022"/>
<dbReference type="CTD" id="27293"/>
<dbReference type="MGI" id="MGI:1916022">
    <property type="gene designation" value="Smpdl3b"/>
</dbReference>
<dbReference type="VEuPathDB" id="HostDB:ENSMUSG00000028885"/>
<dbReference type="eggNOG" id="KOG3770">
    <property type="taxonomic scope" value="Eukaryota"/>
</dbReference>
<dbReference type="GeneTree" id="ENSGT00950000183182"/>
<dbReference type="HOGENOM" id="CLU_014743_0_2_1"/>
<dbReference type="InParanoid" id="P58242"/>
<dbReference type="OMA" id="GNFWHIT"/>
<dbReference type="OrthoDB" id="348678at2759"/>
<dbReference type="PhylomeDB" id="P58242"/>
<dbReference type="TreeFam" id="TF313674"/>
<dbReference type="BRENDA" id="3.1.4.12">
    <property type="organism ID" value="3474"/>
</dbReference>
<dbReference type="BioGRID-ORCS" id="100340">
    <property type="hits" value="2 hits in 79 CRISPR screens"/>
</dbReference>
<dbReference type="PRO" id="PR:P58242"/>
<dbReference type="Proteomes" id="UP000000589">
    <property type="component" value="Chromosome 4"/>
</dbReference>
<dbReference type="RNAct" id="P58242">
    <property type="molecule type" value="protein"/>
</dbReference>
<dbReference type="Bgee" id="ENSMUSG00000028885">
    <property type="expression patterns" value="Expressed in small intestine Peyer's patch and 137 other cell types or tissues"/>
</dbReference>
<dbReference type="ExpressionAtlas" id="P58242">
    <property type="expression patterns" value="baseline and differential"/>
</dbReference>
<dbReference type="GO" id="GO:0005615">
    <property type="term" value="C:extracellular space"/>
    <property type="evidence" value="ECO:0007669"/>
    <property type="project" value="InterPro"/>
</dbReference>
<dbReference type="GO" id="GO:0005886">
    <property type="term" value="C:plasma membrane"/>
    <property type="evidence" value="ECO:0000314"/>
    <property type="project" value="UniProtKB"/>
</dbReference>
<dbReference type="GO" id="GO:0098552">
    <property type="term" value="C:side of membrane"/>
    <property type="evidence" value="ECO:0007669"/>
    <property type="project" value="UniProtKB-KW"/>
</dbReference>
<dbReference type="GO" id="GO:0016798">
    <property type="term" value="F:hydrolase activity, acting on glycosyl bonds"/>
    <property type="evidence" value="ECO:0007669"/>
    <property type="project" value="UniProtKB-KW"/>
</dbReference>
<dbReference type="GO" id="GO:0008081">
    <property type="term" value="F:phosphoric diester hydrolase activity"/>
    <property type="evidence" value="ECO:0000314"/>
    <property type="project" value="UniProtKB"/>
</dbReference>
<dbReference type="GO" id="GO:0004767">
    <property type="term" value="F:sphingomyelin phosphodiesterase activity"/>
    <property type="evidence" value="ECO:0007669"/>
    <property type="project" value="InterPro"/>
</dbReference>
<dbReference type="GO" id="GO:0008270">
    <property type="term" value="F:zinc ion binding"/>
    <property type="evidence" value="ECO:0000314"/>
    <property type="project" value="UniProtKB"/>
</dbReference>
<dbReference type="GO" id="GO:0006954">
    <property type="term" value="P:inflammatory response"/>
    <property type="evidence" value="ECO:0007669"/>
    <property type="project" value="UniProtKB-KW"/>
</dbReference>
<dbReference type="GO" id="GO:0045087">
    <property type="term" value="P:innate immune response"/>
    <property type="evidence" value="ECO:0007669"/>
    <property type="project" value="UniProtKB-KW"/>
</dbReference>
<dbReference type="GO" id="GO:0046466">
    <property type="term" value="P:membrane lipid catabolic process"/>
    <property type="evidence" value="ECO:0000315"/>
    <property type="project" value="UniProtKB"/>
</dbReference>
<dbReference type="GO" id="GO:0050728">
    <property type="term" value="P:negative regulation of inflammatory response"/>
    <property type="evidence" value="ECO:0000315"/>
    <property type="project" value="UniProtKB"/>
</dbReference>
<dbReference type="GO" id="GO:0045824">
    <property type="term" value="P:negative regulation of innate immune response"/>
    <property type="evidence" value="ECO:0000304"/>
    <property type="project" value="UniProtKB"/>
</dbReference>
<dbReference type="GO" id="GO:0034122">
    <property type="term" value="P:negative regulation of toll-like receptor signaling pathway"/>
    <property type="evidence" value="ECO:0000315"/>
    <property type="project" value="UniProtKB"/>
</dbReference>
<dbReference type="GO" id="GO:0006685">
    <property type="term" value="P:sphingomyelin catabolic process"/>
    <property type="evidence" value="ECO:0007669"/>
    <property type="project" value="InterPro"/>
</dbReference>
<dbReference type="CDD" id="cd00842">
    <property type="entry name" value="MPP_ASMase"/>
    <property type="match status" value="1"/>
</dbReference>
<dbReference type="FunFam" id="3.60.21.10:FF:000057">
    <property type="entry name" value="Acid sphingomyelinase-like phosphodiesterase"/>
    <property type="match status" value="1"/>
</dbReference>
<dbReference type="Gene3D" id="3.60.21.10">
    <property type="match status" value="1"/>
</dbReference>
<dbReference type="InterPro" id="IPR017064">
    <property type="entry name" value="ASM-like_Pdiesterase_prd"/>
</dbReference>
<dbReference type="InterPro" id="IPR045473">
    <property type="entry name" value="ASM_C"/>
</dbReference>
<dbReference type="InterPro" id="IPR041805">
    <property type="entry name" value="ASMase/PPN1_MPP"/>
</dbReference>
<dbReference type="InterPro" id="IPR004843">
    <property type="entry name" value="Calcineurin-like_PHP_ApaH"/>
</dbReference>
<dbReference type="InterPro" id="IPR029052">
    <property type="entry name" value="Metallo-depent_PP-like"/>
</dbReference>
<dbReference type="PANTHER" id="PTHR10340:SF25">
    <property type="entry name" value="ACID SPHINGOMYELINASE-LIKE PHOSPHODIESTERASE 3B"/>
    <property type="match status" value="1"/>
</dbReference>
<dbReference type="PANTHER" id="PTHR10340">
    <property type="entry name" value="SPHINGOMYELIN PHOSPHODIESTERASE"/>
    <property type="match status" value="1"/>
</dbReference>
<dbReference type="Pfam" id="PF19272">
    <property type="entry name" value="ASMase_C"/>
    <property type="match status" value="1"/>
</dbReference>
<dbReference type="Pfam" id="PF00149">
    <property type="entry name" value="Metallophos"/>
    <property type="match status" value="1"/>
</dbReference>
<dbReference type="PIRSF" id="PIRSF036767">
    <property type="entry name" value="ASM-like_PDE"/>
    <property type="match status" value="1"/>
</dbReference>
<dbReference type="SUPFAM" id="SSF56300">
    <property type="entry name" value="Metallo-dependent phosphatases"/>
    <property type="match status" value="1"/>
</dbReference>
<evidence type="ECO:0000250" key="1"/>
<evidence type="ECO:0000255" key="2"/>
<evidence type="ECO:0000269" key="3">
    <source>
    </source>
</evidence>
<evidence type="ECO:0000269" key="4">
    <source>
    </source>
</evidence>
<evidence type="ECO:0000269" key="5">
    <source>
    </source>
</evidence>
<evidence type="ECO:0000269" key="6">
    <source>
    </source>
</evidence>
<evidence type="ECO:0000305" key="7"/>
<evidence type="ECO:0007744" key="8">
    <source>
        <dbReference type="PDB" id="5KAR"/>
    </source>
</evidence>
<evidence type="ECO:0007744" key="9">
    <source>
        <dbReference type="PDB" id="5KAS"/>
    </source>
</evidence>
<evidence type="ECO:0007829" key="10">
    <source>
        <dbReference type="PDB" id="5KAR"/>
    </source>
</evidence>
<evidence type="ECO:0007829" key="11">
    <source>
        <dbReference type="PDB" id="5KAS"/>
    </source>
</evidence>
<feature type="signal peptide" evidence="2">
    <location>
        <begin position="1"/>
        <end position="18"/>
    </location>
</feature>
<feature type="chain" id="PRO_0000002332" description="Acid sphingomyelinase-like phosphodiesterase 3b">
    <location>
        <begin position="19"/>
        <end position="456"/>
    </location>
</feature>
<feature type="binding site" evidence="6 8 9">
    <location>
        <position position="28"/>
    </location>
    <ligand>
        <name>Zn(2+)</name>
        <dbReference type="ChEBI" id="CHEBI:29105"/>
        <label>1</label>
    </ligand>
</feature>
<feature type="binding site" evidence="6 8 9">
    <location>
        <position position="30"/>
    </location>
    <ligand>
        <name>Zn(2+)</name>
        <dbReference type="ChEBI" id="CHEBI:29105"/>
        <label>1</label>
    </ligand>
</feature>
<feature type="binding site" evidence="6 8 9">
    <location>
        <position position="93"/>
    </location>
    <ligand>
        <name>Zn(2+)</name>
        <dbReference type="ChEBI" id="CHEBI:29105"/>
        <label>1</label>
    </ligand>
</feature>
<feature type="binding site" evidence="6 8 9">
    <location>
        <position position="93"/>
    </location>
    <ligand>
        <name>Zn(2+)</name>
        <dbReference type="ChEBI" id="CHEBI:29105"/>
        <label>2</label>
    </ligand>
</feature>
<feature type="binding site" evidence="6 8 9">
    <location>
        <position position="134"/>
    </location>
    <ligand>
        <name>Zn(2+)</name>
        <dbReference type="ChEBI" id="CHEBI:29105"/>
        <label>2</label>
    </ligand>
</feature>
<feature type="binding site" evidence="6 8 9">
    <location>
        <position position="236"/>
    </location>
    <ligand>
        <name>Zn(2+)</name>
        <dbReference type="ChEBI" id="CHEBI:29105"/>
        <label>2</label>
    </ligand>
</feature>
<feature type="binding site" evidence="6 8 9">
    <location>
        <position position="277"/>
    </location>
    <ligand>
        <name>Zn(2+)</name>
        <dbReference type="ChEBI" id="CHEBI:29105"/>
        <label>2</label>
    </ligand>
</feature>
<feature type="binding site" evidence="6 8 9">
    <location>
        <position position="279"/>
    </location>
    <ligand>
        <name>Zn(2+)</name>
        <dbReference type="ChEBI" id="CHEBI:29105"/>
        <label>1</label>
    </ligand>
</feature>
<feature type="glycosylation site" description="N-linked (GlcNAc...) asparagine" evidence="3 4 6 8 9">
    <location>
        <position position="34"/>
    </location>
</feature>
<feature type="glycosylation site" description="N-linked (GlcNAc...) asparagine" evidence="6 8 9">
    <location>
        <position position="72"/>
    </location>
</feature>
<feature type="glycosylation site" description="N-linked (GlcNAc...) asparagine" evidence="2">
    <location>
        <position position="100"/>
    </location>
</feature>
<feature type="glycosylation site" description="N-linked (GlcNAc...) asparagine" evidence="3">
    <location>
        <position position="164"/>
    </location>
</feature>
<feature type="glycosylation site" description="N-linked (GlcNAc...) asparagine" evidence="3 4 6 8 9">
    <location>
        <position position="223"/>
    </location>
</feature>
<feature type="disulfide bond" evidence="6 8 9">
    <location>
        <begin position="45"/>
        <end position="64"/>
    </location>
</feature>
<feature type="disulfide bond" evidence="6 8 9">
    <location>
        <begin position="405"/>
        <end position="409"/>
    </location>
</feature>
<feature type="disulfide bond" evidence="6 8 9">
    <location>
        <begin position="415"/>
        <end position="428"/>
    </location>
</feature>
<feature type="mutagenesis site" description="Reduced phosphodiesterase activity. Decreases inhibition of innate immune responses." evidence="5 6">
    <original>H</original>
    <variation>A</variation>
    <location>
        <position position="135"/>
    </location>
</feature>
<feature type="mutagenesis site" description="Reduced phosphodiesterase activity. Decreases inhibition of innate immune responses." evidence="6">
    <original>KN</original>
    <variation>MA</variation>
    <location>
        <begin position="140"/>
        <end position="141"/>
    </location>
</feature>
<feature type="mutagenesis site" description="No effect on enzyme activity and innate immune responses." evidence="6">
    <original>YSN</original>
    <variation>FSA</variation>
    <location>
        <begin position="198"/>
        <end position="200"/>
    </location>
</feature>
<feature type="mutagenesis site" description="Increased phosphodiesterase activity (in vitro)." evidence="6">
    <original>KTTLPGVVD</original>
    <variation>SG</variation>
    <location>
        <begin position="307"/>
        <end position="315"/>
    </location>
</feature>
<feature type="strand" evidence="10">
    <location>
        <begin position="21"/>
        <end position="26"/>
    </location>
</feature>
<feature type="helix" evidence="11">
    <location>
        <begin position="41"/>
        <end position="43"/>
    </location>
</feature>
<feature type="helix" evidence="10">
    <location>
        <begin position="46"/>
        <end position="48"/>
    </location>
</feature>
<feature type="helix" evidence="10">
    <location>
        <begin position="68"/>
        <end position="81"/>
    </location>
</feature>
<feature type="strand" evidence="10">
    <location>
        <begin position="86"/>
        <end position="90"/>
    </location>
</feature>
<feature type="helix" evidence="10">
    <location>
        <begin position="100"/>
        <end position="102"/>
    </location>
</feature>
<feature type="helix" evidence="10">
    <location>
        <begin position="105"/>
        <end position="122"/>
    </location>
</feature>
<feature type="strand" evidence="10">
    <location>
        <begin position="128"/>
        <end position="130"/>
    </location>
</feature>
<feature type="strand" evidence="10">
    <location>
        <begin position="136"/>
        <end position="139"/>
    </location>
</feature>
<feature type="helix" evidence="10">
    <location>
        <begin position="149"/>
        <end position="158"/>
    </location>
</feature>
<feature type="helix" evidence="10">
    <location>
        <begin position="159"/>
        <end position="161"/>
    </location>
</feature>
<feature type="helix" evidence="10">
    <location>
        <begin position="164"/>
        <end position="173"/>
    </location>
</feature>
<feature type="strand" evidence="10">
    <location>
        <begin position="176"/>
        <end position="179"/>
    </location>
</feature>
<feature type="strand" evidence="10">
    <location>
        <begin position="184"/>
        <end position="191"/>
    </location>
</feature>
<feature type="helix" evidence="10">
    <location>
        <begin position="194"/>
        <end position="197"/>
    </location>
</feature>
<feature type="helix" evidence="10">
    <location>
        <begin position="202"/>
        <end position="204"/>
    </location>
</feature>
<feature type="helix" evidence="10">
    <location>
        <begin position="210"/>
        <end position="212"/>
    </location>
</feature>
<feature type="helix" evidence="10">
    <location>
        <begin position="213"/>
        <end position="227"/>
    </location>
</feature>
<feature type="strand" evidence="10">
    <location>
        <begin position="230"/>
        <end position="234"/>
    </location>
</feature>
<feature type="strand" evidence="10">
    <location>
        <begin position="239"/>
        <end position="241"/>
    </location>
</feature>
<feature type="strand" evidence="10">
    <location>
        <begin position="245"/>
        <end position="247"/>
    </location>
</feature>
<feature type="strand" evidence="10">
    <location>
        <begin position="249"/>
        <end position="251"/>
    </location>
</feature>
<feature type="helix" evidence="10">
    <location>
        <begin position="253"/>
        <end position="266"/>
    </location>
</feature>
<feature type="helix" evidence="10">
    <location>
        <begin position="267"/>
        <end position="269"/>
    </location>
</feature>
<feature type="strand" evidence="10">
    <location>
        <begin position="270"/>
        <end position="275"/>
    </location>
</feature>
<feature type="strand" evidence="10">
    <location>
        <begin position="282"/>
        <end position="287"/>
    </location>
</feature>
<feature type="strand" evidence="10">
    <location>
        <begin position="293"/>
        <end position="299"/>
    </location>
</feature>
<feature type="strand" evidence="10">
    <location>
        <begin position="321"/>
        <end position="327"/>
    </location>
</feature>
<feature type="turn" evidence="10">
    <location>
        <begin position="329"/>
        <end position="331"/>
    </location>
</feature>
<feature type="strand" evidence="10">
    <location>
        <begin position="334"/>
        <end position="341"/>
    </location>
</feature>
<feature type="helix" evidence="10">
    <location>
        <begin position="344"/>
        <end position="347"/>
    </location>
</feature>
<feature type="strand" evidence="10">
    <location>
        <begin position="350"/>
        <end position="352"/>
    </location>
</feature>
<feature type="strand" evidence="10">
    <location>
        <begin position="356"/>
        <end position="360"/>
    </location>
</feature>
<feature type="helix" evidence="10">
    <location>
        <begin position="361"/>
        <end position="365"/>
    </location>
</feature>
<feature type="strand" evidence="10">
    <location>
        <begin position="368"/>
        <end position="371"/>
    </location>
</feature>
<feature type="helix" evidence="10">
    <location>
        <begin position="372"/>
        <end position="384"/>
    </location>
</feature>
<feature type="helix" evidence="10">
    <location>
        <begin position="386"/>
        <end position="396"/>
    </location>
</feature>
<feature type="turn" evidence="10">
    <location>
        <begin position="397"/>
        <end position="399"/>
    </location>
</feature>
<feature type="helix" evidence="10">
    <location>
        <begin position="407"/>
        <end position="418"/>
    </location>
</feature>
<feature type="helix" evidence="10">
    <location>
        <begin position="422"/>
        <end position="429"/>
    </location>
</feature>
<sequence length="456" mass="51600">MTLLGWLIFLAPWGVAGAQLGRFWHISDLHLDPNYTVSKDPLQVCPSAGSQPVLNAGPWGDYLCDSPWALINSSLYAMKEIEPKPDFILWTGDDTPHVPNESLGEAAVLAIVERLTNLIKEVFPDTKVYAALGNHDFHPKNQFPAQSNRIYNQVAELWRPWLSNESYALFKRGAFYSEKLPGPSRAGRVVVLNTNLYYSNNEQTAGMADPGEQFRWLGDVLSNASRDGEMVYVIGHVPPGFFEKTQNKAWFRESFNEEYLKVIQKHHRVIAGQFFGHHHTDSFRMFYDNTGAPINVMFLTPGVTPWKTTLPGVVDGANNPGIRIFEYDRATLNLKDLVTYFLNLRQANVQETPRWEQEYRLTEAYQVPDASVSSMHTALTRIASEPHILQRYYVYNSVSYNHLTCEDSCRIEHVCAIQHVAFNTYATCLHGLGAKLVPGFLLILTLLPSLHVLEVL</sequence>
<organism>
    <name type="scientific">Mus musculus</name>
    <name type="common">Mouse</name>
    <dbReference type="NCBI Taxonomy" id="10090"/>
    <lineage>
        <taxon>Eukaryota</taxon>
        <taxon>Metazoa</taxon>
        <taxon>Chordata</taxon>
        <taxon>Craniata</taxon>
        <taxon>Vertebrata</taxon>
        <taxon>Euteleostomi</taxon>
        <taxon>Mammalia</taxon>
        <taxon>Eutheria</taxon>
        <taxon>Euarchontoglires</taxon>
        <taxon>Glires</taxon>
        <taxon>Rodentia</taxon>
        <taxon>Myomorpha</taxon>
        <taxon>Muroidea</taxon>
        <taxon>Muridae</taxon>
        <taxon>Murinae</taxon>
        <taxon>Mus</taxon>
        <taxon>Mus</taxon>
    </lineage>
</organism>
<accession>P58242</accession>
<protein>
    <recommendedName>
        <fullName>Acid sphingomyelinase-like phosphodiesterase 3b</fullName>
        <shortName>ASM-like phosphodiesterase 3b</shortName>
        <ecNumber evidence="5 6">3.1.4.-</ecNumber>
    </recommendedName>
</protein>